<sequence>MLQVYLVRHGETQWNAERRIQGQSDSPLTAKGEQQAMQVGERARSLGITHIISSDLGRTKRTAEIIAQACGCDITFDSRLRELDMGVLEKRQIDSLTEEEEGWRRQLVNGTQDGRIPGGESMQELSDRVHAALASCLELPQGSRPLLVSHGIALGCLVSTILGLPAWAERRLRLRNCSISRIDYQESQWLASGWVVETAGDVSHLDAPALDELQR</sequence>
<evidence type="ECO:0000255" key="1">
    <source>
        <dbReference type="HAMAP-Rule" id="MF_01040"/>
    </source>
</evidence>
<organism>
    <name type="scientific">Salmonella paratyphi B (strain ATCC BAA-1250 / SPB7)</name>
    <dbReference type="NCBI Taxonomy" id="1016998"/>
    <lineage>
        <taxon>Bacteria</taxon>
        <taxon>Pseudomonadati</taxon>
        <taxon>Pseudomonadota</taxon>
        <taxon>Gammaproteobacteria</taxon>
        <taxon>Enterobacterales</taxon>
        <taxon>Enterobacteriaceae</taxon>
        <taxon>Salmonella</taxon>
    </lineage>
</organism>
<reference key="1">
    <citation type="submission" date="2007-11" db="EMBL/GenBank/DDBJ databases">
        <authorList>
            <consortium name="The Salmonella enterica serovar Paratyphi B Genome Sequencing Project"/>
            <person name="McClelland M."/>
            <person name="Sanderson E.K."/>
            <person name="Porwollik S."/>
            <person name="Spieth J."/>
            <person name="Clifton W.S."/>
            <person name="Fulton R."/>
            <person name="Cordes M."/>
            <person name="Wollam A."/>
            <person name="Shah N."/>
            <person name="Pepin K."/>
            <person name="Bhonagiri V."/>
            <person name="Nash W."/>
            <person name="Johnson M."/>
            <person name="Thiruvilangam P."/>
            <person name="Wilson R."/>
        </authorList>
    </citation>
    <scope>NUCLEOTIDE SEQUENCE [LARGE SCALE GENOMIC DNA]</scope>
    <source>
        <strain>ATCC BAA-1250 / SPB7</strain>
    </source>
</reference>
<comment type="catalytic activity">
    <reaction evidence="1">
        <text>(2R)-2-phosphoglycerate = (2R)-3-phosphoglycerate</text>
        <dbReference type="Rhea" id="RHEA:15901"/>
        <dbReference type="ChEBI" id="CHEBI:58272"/>
        <dbReference type="ChEBI" id="CHEBI:58289"/>
    </reaction>
</comment>
<comment type="pathway">
    <text evidence="1">Carbohydrate degradation; glycolysis; pyruvate from D-glyceraldehyde 3-phosphate: step 3/5.</text>
</comment>
<comment type="similarity">
    <text evidence="1">Belongs to the phosphoglycerate mutase family. GpmB subfamily.</text>
</comment>
<dbReference type="EC" id="5.4.2.-" evidence="1"/>
<dbReference type="EMBL" id="CP000886">
    <property type="protein sequence ID" value="ABX71028.1"/>
    <property type="molecule type" value="Genomic_DNA"/>
</dbReference>
<dbReference type="RefSeq" id="WP_000942363.1">
    <property type="nucleotide sequence ID" value="NC_010102.1"/>
</dbReference>
<dbReference type="SMR" id="A9N7F5"/>
<dbReference type="KEGG" id="spq:SPAB_05763"/>
<dbReference type="PATRIC" id="fig|1016998.12.peg.5400"/>
<dbReference type="HOGENOM" id="CLU_033323_9_5_6"/>
<dbReference type="BioCyc" id="SENT1016998:SPAB_RS23520-MONOMER"/>
<dbReference type="UniPathway" id="UPA00109">
    <property type="reaction ID" value="UER00186"/>
</dbReference>
<dbReference type="Proteomes" id="UP000008556">
    <property type="component" value="Chromosome"/>
</dbReference>
<dbReference type="GO" id="GO:0005737">
    <property type="term" value="C:cytoplasm"/>
    <property type="evidence" value="ECO:0007669"/>
    <property type="project" value="TreeGrafter"/>
</dbReference>
<dbReference type="GO" id="GO:0016791">
    <property type="term" value="F:phosphatase activity"/>
    <property type="evidence" value="ECO:0007669"/>
    <property type="project" value="TreeGrafter"/>
</dbReference>
<dbReference type="GO" id="GO:0004619">
    <property type="term" value="F:phosphoglycerate mutase activity"/>
    <property type="evidence" value="ECO:0007669"/>
    <property type="project" value="UniProtKB-UniRule"/>
</dbReference>
<dbReference type="GO" id="GO:0006096">
    <property type="term" value="P:glycolytic process"/>
    <property type="evidence" value="ECO:0007669"/>
    <property type="project" value="UniProtKB-UniRule"/>
</dbReference>
<dbReference type="CDD" id="cd07067">
    <property type="entry name" value="HP_PGM_like"/>
    <property type="match status" value="1"/>
</dbReference>
<dbReference type="Gene3D" id="3.40.50.1240">
    <property type="entry name" value="Phosphoglycerate mutase-like"/>
    <property type="match status" value="1"/>
</dbReference>
<dbReference type="HAMAP" id="MF_01040">
    <property type="entry name" value="PGAM_GpmB"/>
    <property type="match status" value="1"/>
</dbReference>
<dbReference type="InterPro" id="IPR013078">
    <property type="entry name" value="His_Pase_superF_clade-1"/>
</dbReference>
<dbReference type="InterPro" id="IPR029033">
    <property type="entry name" value="His_PPase_superfam"/>
</dbReference>
<dbReference type="InterPro" id="IPR001345">
    <property type="entry name" value="PG/BPGM_mutase_AS"/>
</dbReference>
<dbReference type="InterPro" id="IPR050275">
    <property type="entry name" value="PGM_Phosphatase"/>
</dbReference>
<dbReference type="InterPro" id="IPR023086">
    <property type="entry name" value="Phosphoglycerate_mutase_GpmB"/>
</dbReference>
<dbReference type="NCBIfam" id="NF002901">
    <property type="entry name" value="PRK03482.1"/>
    <property type="match status" value="1"/>
</dbReference>
<dbReference type="PANTHER" id="PTHR48100">
    <property type="entry name" value="BROAD-SPECIFICITY PHOSPHATASE YOR283W-RELATED"/>
    <property type="match status" value="1"/>
</dbReference>
<dbReference type="PANTHER" id="PTHR48100:SF1">
    <property type="entry name" value="HISTIDINE PHOSPHATASE FAMILY PROTEIN-RELATED"/>
    <property type="match status" value="1"/>
</dbReference>
<dbReference type="Pfam" id="PF00300">
    <property type="entry name" value="His_Phos_1"/>
    <property type="match status" value="1"/>
</dbReference>
<dbReference type="SMART" id="SM00855">
    <property type="entry name" value="PGAM"/>
    <property type="match status" value="1"/>
</dbReference>
<dbReference type="SUPFAM" id="SSF53254">
    <property type="entry name" value="Phosphoglycerate mutase-like"/>
    <property type="match status" value="1"/>
</dbReference>
<dbReference type="PROSITE" id="PS00175">
    <property type="entry name" value="PG_MUTASE"/>
    <property type="match status" value="1"/>
</dbReference>
<keyword id="KW-0324">Glycolysis</keyword>
<keyword id="KW-0413">Isomerase</keyword>
<protein>
    <recommendedName>
        <fullName evidence="1">Probable phosphoglycerate mutase GpmB</fullName>
        <ecNumber evidence="1">5.4.2.-</ecNumber>
    </recommendedName>
    <alternativeName>
        <fullName evidence="1">PGAM</fullName>
    </alternativeName>
    <alternativeName>
        <fullName evidence="1">Phosphoglyceromutase</fullName>
    </alternativeName>
</protein>
<gene>
    <name evidence="1" type="primary">gpmB</name>
    <name type="ordered locus">SPAB_05763</name>
</gene>
<name>GPMB_SALPB</name>
<feature type="chain" id="PRO_1000084337" description="Probable phosphoglycerate mutase GpmB">
    <location>
        <begin position="1"/>
        <end position="215"/>
    </location>
</feature>
<feature type="active site" description="Tele-phosphohistidine intermediate" evidence="1">
    <location>
        <position position="9"/>
    </location>
</feature>
<feature type="active site" description="Proton donor/acceptor" evidence="1">
    <location>
        <position position="82"/>
    </location>
</feature>
<feature type="binding site" evidence="1">
    <location>
        <begin position="8"/>
        <end position="15"/>
    </location>
    <ligand>
        <name>substrate</name>
    </ligand>
</feature>
<feature type="binding site" evidence="1">
    <location>
        <begin position="21"/>
        <end position="22"/>
    </location>
    <ligand>
        <name>substrate</name>
    </ligand>
</feature>
<feature type="binding site" evidence="1">
    <location>
        <position position="58"/>
    </location>
    <ligand>
        <name>substrate</name>
    </ligand>
</feature>
<feature type="binding site" evidence="1">
    <location>
        <position position="60"/>
    </location>
    <ligand>
        <name>substrate</name>
    </ligand>
</feature>
<feature type="binding site" evidence="1">
    <location>
        <begin position="82"/>
        <end position="85"/>
    </location>
    <ligand>
        <name>substrate</name>
    </ligand>
</feature>
<feature type="binding site" evidence="1">
    <location>
        <begin position="104"/>
        <end position="105"/>
    </location>
    <ligand>
        <name>substrate</name>
    </ligand>
</feature>
<feature type="binding site" evidence="1">
    <location>
        <begin position="151"/>
        <end position="152"/>
    </location>
    <ligand>
        <name>substrate</name>
    </ligand>
</feature>
<feature type="site" description="Transition state stabilizer" evidence="1">
    <location>
        <position position="150"/>
    </location>
</feature>
<proteinExistence type="inferred from homology"/>
<accession>A9N7F5</accession>